<protein>
    <recommendedName>
        <fullName evidence="1">NAD kinase</fullName>
        <ecNumber evidence="1">2.7.1.23</ecNumber>
    </recommendedName>
    <alternativeName>
        <fullName evidence="1">ATP-dependent NAD kinase</fullName>
    </alternativeName>
</protein>
<proteinExistence type="inferred from homology"/>
<keyword id="KW-0067">ATP-binding</keyword>
<keyword id="KW-0963">Cytoplasm</keyword>
<keyword id="KW-0418">Kinase</keyword>
<keyword id="KW-0520">NAD</keyword>
<keyword id="KW-0521">NADP</keyword>
<keyword id="KW-0547">Nucleotide-binding</keyword>
<keyword id="KW-0808">Transferase</keyword>
<accession>Q4KBJ2</accession>
<name>NADK_PSEF5</name>
<gene>
    <name evidence="1" type="primary">nadK</name>
    <name type="ordered locus">PFL_3286</name>
</gene>
<feature type="chain" id="PRO_0000229678" description="NAD kinase">
    <location>
        <begin position="1"/>
        <end position="296"/>
    </location>
</feature>
<feature type="active site" description="Proton acceptor" evidence="1">
    <location>
        <position position="72"/>
    </location>
</feature>
<feature type="binding site" evidence="1">
    <location>
        <begin position="72"/>
        <end position="73"/>
    </location>
    <ligand>
        <name>NAD(+)</name>
        <dbReference type="ChEBI" id="CHEBI:57540"/>
    </ligand>
</feature>
<feature type="binding site" evidence="1">
    <location>
        <begin position="146"/>
        <end position="147"/>
    </location>
    <ligand>
        <name>NAD(+)</name>
        <dbReference type="ChEBI" id="CHEBI:57540"/>
    </ligand>
</feature>
<feature type="binding site" evidence="1">
    <location>
        <position position="157"/>
    </location>
    <ligand>
        <name>NAD(+)</name>
        <dbReference type="ChEBI" id="CHEBI:57540"/>
    </ligand>
</feature>
<feature type="binding site" evidence="1">
    <location>
        <position position="174"/>
    </location>
    <ligand>
        <name>NAD(+)</name>
        <dbReference type="ChEBI" id="CHEBI:57540"/>
    </ligand>
</feature>
<feature type="binding site" evidence="1">
    <location>
        <position position="176"/>
    </location>
    <ligand>
        <name>NAD(+)</name>
        <dbReference type="ChEBI" id="CHEBI:57540"/>
    </ligand>
</feature>
<feature type="binding site" evidence="1">
    <location>
        <begin position="187"/>
        <end position="192"/>
    </location>
    <ligand>
        <name>NAD(+)</name>
        <dbReference type="ChEBI" id="CHEBI:57540"/>
    </ligand>
</feature>
<feature type="binding site" evidence="1">
    <location>
        <position position="247"/>
    </location>
    <ligand>
        <name>NAD(+)</name>
        <dbReference type="ChEBI" id="CHEBI:57540"/>
    </ligand>
</feature>
<reference key="1">
    <citation type="journal article" date="2005" name="Nat. Biotechnol.">
        <title>Complete genome sequence of the plant commensal Pseudomonas fluorescens Pf-5.</title>
        <authorList>
            <person name="Paulsen I.T."/>
            <person name="Press C.M."/>
            <person name="Ravel J."/>
            <person name="Kobayashi D.Y."/>
            <person name="Myers G.S.A."/>
            <person name="Mavrodi D.V."/>
            <person name="DeBoy R.T."/>
            <person name="Seshadri R."/>
            <person name="Ren Q."/>
            <person name="Madupu R."/>
            <person name="Dodson R.J."/>
            <person name="Durkin A.S."/>
            <person name="Brinkac L.M."/>
            <person name="Daugherty S.C."/>
            <person name="Sullivan S.A."/>
            <person name="Rosovitz M.J."/>
            <person name="Gwinn M.L."/>
            <person name="Zhou L."/>
            <person name="Schneider D.J."/>
            <person name="Cartinhour S.W."/>
            <person name="Nelson W.C."/>
            <person name="Weidman J."/>
            <person name="Watkins K."/>
            <person name="Tran K."/>
            <person name="Khouri H."/>
            <person name="Pierson E.A."/>
            <person name="Pierson L.S. III"/>
            <person name="Thomashow L.S."/>
            <person name="Loper J.E."/>
        </authorList>
    </citation>
    <scope>NUCLEOTIDE SEQUENCE [LARGE SCALE GENOMIC DNA]</scope>
    <source>
        <strain>ATCC BAA-477 / NRRL B-23932 / Pf-5</strain>
    </source>
</reference>
<comment type="function">
    <text evidence="1">Involved in the regulation of the intracellular balance of NAD and NADP, and is a key enzyme in the biosynthesis of NADP. Catalyzes specifically the phosphorylation on 2'-hydroxyl of the adenosine moiety of NAD to yield NADP.</text>
</comment>
<comment type="catalytic activity">
    <reaction evidence="1">
        <text>NAD(+) + ATP = ADP + NADP(+) + H(+)</text>
        <dbReference type="Rhea" id="RHEA:18629"/>
        <dbReference type="ChEBI" id="CHEBI:15378"/>
        <dbReference type="ChEBI" id="CHEBI:30616"/>
        <dbReference type="ChEBI" id="CHEBI:57540"/>
        <dbReference type="ChEBI" id="CHEBI:58349"/>
        <dbReference type="ChEBI" id="CHEBI:456216"/>
        <dbReference type="EC" id="2.7.1.23"/>
    </reaction>
</comment>
<comment type="cofactor">
    <cofactor evidence="1">
        <name>a divalent metal cation</name>
        <dbReference type="ChEBI" id="CHEBI:60240"/>
    </cofactor>
</comment>
<comment type="subcellular location">
    <subcellularLocation>
        <location evidence="1">Cytoplasm</location>
    </subcellularLocation>
</comment>
<comment type="similarity">
    <text evidence="1">Belongs to the NAD kinase family.</text>
</comment>
<sequence>MEQFRNIGIIGRLGSSQVLDTVRRLKKFLLARHLHVILEDTIAEVLPGHGLQTSSRKLLGEVCDMVIVVGGDGSLLGAARALARHNIPVLGINRGSLGFLTDIRPDELEVKVAEVLDGHYLVENRFLLQAEVRRHAEAIGQGDALNDVVLHPGKSTRMIEFEIYIDGQFVCSQKADGLIVATPTGSTAYALSAGGPIMHPKLDAIVIVPMYPHTLSGRPIVVDGNSELKIVVSKDMQIYPQVSCDGQNHFTCAPGDTITVSKKAQKLRLIHPLDHNYYEVCRTKLGWGSRLGGGGD</sequence>
<evidence type="ECO:0000255" key="1">
    <source>
        <dbReference type="HAMAP-Rule" id="MF_00361"/>
    </source>
</evidence>
<organism>
    <name type="scientific">Pseudomonas fluorescens (strain ATCC BAA-477 / NRRL B-23932 / Pf-5)</name>
    <dbReference type="NCBI Taxonomy" id="220664"/>
    <lineage>
        <taxon>Bacteria</taxon>
        <taxon>Pseudomonadati</taxon>
        <taxon>Pseudomonadota</taxon>
        <taxon>Gammaproteobacteria</taxon>
        <taxon>Pseudomonadales</taxon>
        <taxon>Pseudomonadaceae</taxon>
        <taxon>Pseudomonas</taxon>
    </lineage>
</organism>
<dbReference type="EC" id="2.7.1.23" evidence="1"/>
<dbReference type="EMBL" id="CP000076">
    <property type="protein sequence ID" value="AAY92555.1"/>
    <property type="molecule type" value="Genomic_DNA"/>
</dbReference>
<dbReference type="RefSeq" id="WP_007920913.1">
    <property type="nucleotide sequence ID" value="NC_004129.6"/>
</dbReference>
<dbReference type="SMR" id="Q4KBJ2"/>
<dbReference type="STRING" id="220664.PFL_3286"/>
<dbReference type="KEGG" id="pfl:PFL_3286"/>
<dbReference type="eggNOG" id="COG0061">
    <property type="taxonomic scope" value="Bacteria"/>
</dbReference>
<dbReference type="HOGENOM" id="CLU_008831_0_1_6"/>
<dbReference type="Proteomes" id="UP000008540">
    <property type="component" value="Chromosome"/>
</dbReference>
<dbReference type="GO" id="GO:0005737">
    <property type="term" value="C:cytoplasm"/>
    <property type="evidence" value="ECO:0007669"/>
    <property type="project" value="UniProtKB-SubCell"/>
</dbReference>
<dbReference type="GO" id="GO:0005524">
    <property type="term" value="F:ATP binding"/>
    <property type="evidence" value="ECO:0007669"/>
    <property type="project" value="UniProtKB-KW"/>
</dbReference>
<dbReference type="GO" id="GO:0046872">
    <property type="term" value="F:metal ion binding"/>
    <property type="evidence" value="ECO:0007669"/>
    <property type="project" value="UniProtKB-UniRule"/>
</dbReference>
<dbReference type="GO" id="GO:0051287">
    <property type="term" value="F:NAD binding"/>
    <property type="evidence" value="ECO:0007669"/>
    <property type="project" value="UniProtKB-ARBA"/>
</dbReference>
<dbReference type="GO" id="GO:0003951">
    <property type="term" value="F:NAD+ kinase activity"/>
    <property type="evidence" value="ECO:0007669"/>
    <property type="project" value="UniProtKB-UniRule"/>
</dbReference>
<dbReference type="GO" id="GO:0019674">
    <property type="term" value="P:NAD metabolic process"/>
    <property type="evidence" value="ECO:0007669"/>
    <property type="project" value="InterPro"/>
</dbReference>
<dbReference type="GO" id="GO:0006741">
    <property type="term" value="P:NADP biosynthetic process"/>
    <property type="evidence" value="ECO:0007669"/>
    <property type="project" value="UniProtKB-UniRule"/>
</dbReference>
<dbReference type="FunFam" id="2.60.200.30:FF:000001">
    <property type="entry name" value="NAD kinase"/>
    <property type="match status" value="1"/>
</dbReference>
<dbReference type="Gene3D" id="3.40.50.10330">
    <property type="entry name" value="Probable inorganic polyphosphate/atp-NAD kinase, domain 1"/>
    <property type="match status" value="1"/>
</dbReference>
<dbReference type="Gene3D" id="2.60.200.30">
    <property type="entry name" value="Probable inorganic polyphosphate/atp-NAD kinase, domain 2"/>
    <property type="match status" value="1"/>
</dbReference>
<dbReference type="HAMAP" id="MF_00361">
    <property type="entry name" value="NAD_kinase"/>
    <property type="match status" value="1"/>
</dbReference>
<dbReference type="InterPro" id="IPR017438">
    <property type="entry name" value="ATP-NAD_kinase_N"/>
</dbReference>
<dbReference type="InterPro" id="IPR017437">
    <property type="entry name" value="ATP-NAD_kinase_PpnK-typ_C"/>
</dbReference>
<dbReference type="InterPro" id="IPR016064">
    <property type="entry name" value="NAD/diacylglycerol_kinase_sf"/>
</dbReference>
<dbReference type="InterPro" id="IPR002504">
    <property type="entry name" value="NADK"/>
</dbReference>
<dbReference type="NCBIfam" id="NF002306">
    <property type="entry name" value="PRK01231.1"/>
    <property type="match status" value="1"/>
</dbReference>
<dbReference type="PANTHER" id="PTHR20275">
    <property type="entry name" value="NAD KINASE"/>
    <property type="match status" value="1"/>
</dbReference>
<dbReference type="PANTHER" id="PTHR20275:SF0">
    <property type="entry name" value="NAD KINASE"/>
    <property type="match status" value="1"/>
</dbReference>
<dbReference type="Pfam" id="PF01513">
    <property type="entry name" value="NAD_kinase"/>
    <property type="match status" value="1"/>
</dbReference>
<dbReference type="Pfam" id="PF20143">
    <property type="entry name" value="NAD_kinase_C"/>
    <property type="match status" value="1"/>
</dbReference>
<dbReference type="SUPFAM" id="SSF111331">
    <property type="entry name" value="NAD kinase/diacylglycerol kinase-like"/>
    <property type="match status" value="1"/>
</dbReference>